<accession>A5W190</accession>
<gene>
    <name evidence="1" type="primary">nuoC</name>
    <name evidence="1" type="synonym">nuoCD</name>
    <name evidence="1" type="synonym">nuoD</name>
    <name type="ordered locus">Pput_1744</name>
</gene>
<dbReference type="EC" id="7.1.1.-" evidence="1"/>
<dbReference type="EMBL" id="CP000712">
    <property type="protein sequence ID" value="ABQ77900.1"/>
    <property type="molecule type" value="Genomic_DNA"/>
</dbReference>
<dbReference type="SMR" id="A5W190"/>
<dbReference type="KEGG" id="ppf:Pput_1744"/>
<dbReference type="eggNOG" id="COG0649">
    <property type="taxonomic scope" value="Bacteria"/>
</dbReference>
<dbReference type="eggNOG" id="COG0852">
    <property type="taxonomic scope" value="Bacteria"/>
</dbReference>
<dbReference type="HOGENOM" id="CLU_015134_3_2_6"/>
<dbReference type="GO" id="GO:0030964">
    <property type="term" value="C:NADH dehydrogenase complex"/>
    <property type="evidence" value="ECO:0007669"/>
    <property type="project" value="InterPro"/>
</dbReference>
<dbReference type="GO" id="GO:0005886">
    <property type="term" value="C:plasma membrane"/>
    <property type="evidence" value="ECO:0007669"/>
    <property type="project" value="UniProtKB-SubCell"/>
</dbReference>
<dbReference type="GO" id="GO:0051287">
    <property type="term" value="F:NAD binding"/>
    <property type="evidence" value="ECO:0007669"/>
    <property type="project" value="InterPro"/>
</dbReference>
<dbReference type="GO" id="GO:0008137">
    <property type="term" value="F:NADH dehydrogenase (ubiquinone) activity"/>
    <property type="evidence" value="ECO:0007669"/>
    <property type="project" value="InterPro"/>
</dbReference>
<dbReference type="GO" id="GO:0050136">
    <property type="term" value="F:NADH:ubiquinone reductase (non-electrogenic) activity"/>
    <property type="evidence" value="ECO:0007669"/>
    <property type="project" value="UniProtKB-UniRule"/>
</dbReference>
<dbReference type="GO" id="GO:0048038">
    <property type="term" value="F:quinone binding"/>
    <property type="evidence" value="ECO:0007669"/>
    <property type="project" value="UniProtKB-KW"/>
</dbReference>
<dbReference type="FunFam" id="1.10.645.10:FF:000001">
    <property type="entry name" value="NADH-quinone oxidoreductase subunit C/D"/>
    <property type="match status" value="1"/>
</dbReference>
<dbReference type="FunFam" id="3.30.460.80:FF:000001">
    <property type="entry name" value="NADH-quinone oxidoreductase subunit C/D"/>
    <property type="match status" value="1"/>
</dbReference>
<dbReference type="Gene3D" id="1.10.645.10">
    <property type="entry name" value="Cytochrome-c3 Hydrogenase, chain B"/>
    <property type="match status" value="1"/>
</dbReference>
<dbReference type="Gene3D" id="3.30.460.80">
    <property type="entry name" value="NADH:ubiquinone oxidoreductase, 30kDa subunit"/>
    <property type="match status" value="1"/>
</dbReference>
<dbReference type="HAMAP" id="MF_01357">
    <property type="entry name" value="NDH1_NuoC"/>
    <property type="match status" value="1"/>
</dbReference>
<dbReference type="HAMAP" id="MF_01359">
    <property type="entry name" value="NDH1_NuoCD_1"/>
    <property type="match status" value="1"/>
</dbReference>
<dbReference type="HAMAP" id="MF_01358">
    <property type="entry name" value="NDH1_NuoD"/>
    <property type="match status" value="1"/>
</dbReference>
<dbReference type="InterPro" id="IPR010218">
    <property type="entry name" value="NADH_DH_suC"/>
</dbReference>
<dbReference type="InterPro" id="IPR023062">
    <property type="entry name" value="NADH_DH_suCD"/>
</dbReference>
<dbReference type="InterPro" id="IPR001135">
    <property type="entry name" value="NADH_Q_OxRdtase_suD"/>
</dbReference>
<dbReference type="InterPro" id="IPR037232">
    <property type="entry name" value="NADH_quin_OxRdtase_su_C/D-like"/>
</dbReference>
<dbReference type="InterPro" id="IPR001268">
    <property type="entry name" value="NADH_UbQ_OxRdtase_30kDa_su"/>
</dbReference>
<dbReference type="InterPro" id="IPR014029">
    <property type="entry name" value="NADH_UbQ_OxRdtase_49kDa_CS"/>
</dbReference>
<dbReference type="InterPro" id="IPR022885">
    <property type="entry name" value="NDH1_su_D/H"/>
</dbReference>
<dbReference type="InterPro" id="IPR029014">
    <property type="entry name" value="NiFe-Hase_large"/>
</dbReference>
<dbReference type="NCBIfam" id="TIGR01961">
    <property type="entry name" value="NuoC_fam"/>
    <property type="match status" value="1"/>
</dbReference>
<dbReference type="NCBIfam" id="TIGR01962">
    <property type="entry name" value="NuoD"/>
    <property type="match status" value="1"/>
</dbReference>
<dbReference type="NCBIfam" id="NF004739">
    <property type="entry name" value="PRK06075.1"/>
    <property type="match status" value="1"/>
</dbReference>
<dbReference type="NCBIfam" id="NF008728">
    <property type="entry name" value="PRK11742.1"/>
    <property type="match status" value="1"/>
</dbReference>
<dbReference type="PANTHER" id="PTHR11993:SF45">
    <property type="entry name" value="NADH-QUINONE OXIDOREDUCTASE SUBUNIT C_D"/>
    <property type="match status" value="1"/>
</dbReference>
<dbReference type="PANTHER" id="PTHR11993">
    <property type="entry name" value="NADH-UBIQUINONE OXIDOREDUCTASE 49 KDA SUBUNIT"/>
    <property type="match status" value="1"/>
</dbReference>
<dbReference type="Pfam" id="PF00329">
    <property type="entry name" value="Complex1_30kDa"/>
    <property type="match status" value="1"/>
</dbReference>
<dbReference type="Pfam" id="PF00346">
    <property type="entry name" value="Complex1_49kDa"/>
    <property type="match status" value="1"/>
</dbReference>
<dbReference type="SUPFAM" id="SSF56762">
    <property type="entry name" value="HydB/Nqo4-like"/>
    <property type="match status" value="1"/>
</dbReference>
<dbReference type="SUPFAM" id="SSF143243">
    <property type="entry name" value="Nqo5-like"/>
    <property type="match status" value="1"/>
</dbReference>
<dbReference type="PROSITE" id="PS00535">
    <property type="entry name" value="COMPLEX1_49K"/>
    <property type="match status" value="1"/>
</dbReference>
<name>NUOCD_PSEP1</name>
<sequence>MTADNAIFIPPYKADDQDVVVELNNRFGAEAFVAQETRTGMPVLWVKRAQLKEVLSFLRGVAKPYSMLYDLHGVDERLRTQRRGLPAADFSVFYHLLSIERNSDVMIKVSLSEGDLNLPTVTGIWPNANWYEREVWDMFGIDFAGHPHLSRIMMPPTWEGHPLRKDYPARATEFDPYSLTLAKQQLEEESARFNPEAWGMKRQGANEDYMFLNLGPNHPSAHGAFRIVLQLDGEEIVDCVPDIGYHHRGAEKMAERQSWHSFIPYTDRIDYLGGVMNNLPYVLAVEKLAGIKVPQKVDVIRIMLAEFFRITSHLLFLGTYIQDVGAMTPVFFTFTDRQRAYTVIEAITGFRLHPAWYRIGGVAHDLPRGWDKLVKDFVEWLPKRLDEYTKAALQNSILKGRTIGVAAYNTKEALEWGTTGAGLRATGCNFDLRKARPYSGYENFEFEVPLAHNGDAYDRCMVRVEEMRQSIRIIDQCLRNMPEGPYKADHPLTTPPPKERTLQHIETLITHFLQVSWGPVMPANESFQMIEATKGINSYYLTSDGGTMSYRTRIRTPSYPHLQQIPSVIKGSMVADLIAYLGSIDFVMADVDR</sequence>
<feature type="chain" id="PRO_0000358661" description="NADH-quinone oxidoreductase subunit C/D">
    <location>
        <begin position="1"/>
        <end position="593"/>
    </location>
</feature>
<feature type="region of interest" description="NADH dehydrogenase I subunit C" evidence="1">
    <location>
        <begin position="1"/>
        <end position="184"/>
    </location>
</feature>
<feature type="region of interest" description="NADH dehydrogenase I subunit D" evidence="1">
    <location>
        <begin position="208"/>
        <end position="593"/>
    </location>
</feature>
<proteinExistence type="inferred from homology"/>
<organism>
    <name type="scientific">Pseudomonas putida (strain ATCC 700007 / DSM 6899 / JCM 31910 / BCRC 17059 / LMG 24140 / F1)</name>
    <dbReference type="NCBI Taxonomy" id="351746"/>
    <lineage>
        <taxon>Bacteria</taxon>
        <taxon>Pseudomonadati</taxon>
        <taxon>Pseudomonadota</taxon>
        <taxon>Gammaproteobacteria</taxon>
        <taxon>Pseudomonadales</taxon>
        <taxon>Pseudomonadaceae</taxon>
        <taxon>Pseudomonas</taxon>
    </lineage>
</organism>
<reference key="1">
    <citation type="submission" date="2007-05" db="EMBL/GenBank/DDBJ databases">
        <title>Complete sequence of Pseudomonas putida F1.</title>
        <authorList>
            <consortium name="US DOE Joint Genome Institute"/>
            <person name="Copeland A."/>
            <person name="Lucas S."/>
            <person name="Lapidus A."/>
            <person name="Barry K."/>
            <person name="Detter J.C."/>
            <person name="Glavina del Rio T."/>
            <person name="Hammon N."/>
            <person name="Israni S."/>
            <person name="Dalin E."/>
            <person name="Tice H."/>
            <person name="Pitluck S."/>
            <person name="Chain P."/>
            <person name="Malfatti S."/>
            <person name="Shin M."/>
            <person name="Vergez L."/>
            <person name="Schmutz J."/>
            <person name="Larimer F."/>
            <person name="Land M."/>
            <person name="Hauser L."/>
            <person name="Kyrpides N."/>
            <person name="Lykidis A."/>
            <person name="Parales R."/>
            <person name="Richardson P."/>
        </authorList>
    </citation>
    <scope>NUCLEOTIDE SEQUENCE [LARGE SCALE GENOMIC DNA]</scope>
    <source>
        <strain>ATCC 700007 / DSM 6899 / JCM 31910 / BCRC 17059 / LMG 24140 / F1</strain>
    </source>
</reference>
<evidence type="ECO:0000255" key="1">
    <source>
        <dbReference type="HAMAP-Rule" id="MF_01359"/>
    </source>
</evidence>
<keyword id="KW-0997">Cell inner membrane</keyword>
<keyword id="KW-1003">Cell membrane</keyword>
<keyword id="KW-0472">Membrane</keyword>
<keyword id="KW-0511">Multifunctional enzyme</keyword>
<keyword id="KW-0520">NAD</keyword>
<keyword id="KW-0874">Quinone</keyword>
<keyword id="KW-1278">Translocase</keyword>
<keyword id="KW-0813">Transport</keyword>
<keyword id="KW-0830">Ubiquinone</keyword>
<protein>
    <recommendedName>
        <fullName evidence="1">NADH-quinone oxidoreductase subunit C/D</fullName>
        <ecNumber evidence="1">7.1.1.-</ecNumber>
    </recommendedName>
    <alternativeName>
        <fullName evidence="1">NADH dehydrogenase I subunit C/D</fullName>
    </alternativeName>
    <alternativeName>
        <fullName evidence="1">NDH-1 subunit C/D</fullName>
    </alternativeName>
</protein>
<comment type="function">
    <text evidence="1">NDH-1 shuttles electrons from NADH, via FMN and iron-sulfur (Fe-S) centers, to quinones in the respiratory chain. The immediate electron acceptor for the enzyme in this species is believed to be ubiquinone. Couples the redox reaction to proton translocation (for every two electrons transferred, four hydrogen ions are translocated across the cytoplasmic membrane), and thus conserves the redox energy in a proton gradient.</text>
</comment>
<comment type="catalytic activity">
    <reaction evidence="1">
        <text>a quinone + NADH + 5 H(+)(in) = a quinol + NAD(+) + 4 H(+)(out)</text>
        <dbReference type="Rhea" id="RHEA:57888"/>
        <dbReference type="ChEBI" id="CHEBI:15378"/>
        <dbReference type="ChEBI" id="CHEBI:24646"/>
        <dbReference type="ChEBI" id="CHEBI:57540"/>
        <dbReference type="ChEBI" id="CHEBI:57945"/>
        <dbReference type="ChEBI" id="CHEBI:132124"/>
    </reaction>
</comment>
<comment type="subunit">
    <text evidence="1">NDH-1 is composed of 13 different subunits. Subunits NuoB, CD, E, F, and G constitute the peripheral sector of the complex.</text>
</comment>
<comment type="subcellular location">
    <subcellularLocation>
        <location evidence="1">Cell inner membrane</location>
        <topology evidence="1">Peripheral membrane protein</topology>
        <orientation evidence="1">Cytoplasmic side</orientation>
    </subcellularLocation>
</comment>
<comment type="similarity">
    <text evidence="1">In the N-terminal section; belongs to the complex I 30 kDa subunit family.</text>
</comment>
<comment type="similarity">
    <text evidence="1">In the C-terminal section; belongs to the complex I 49 kDa subunit family.</text>
</comment>